<feature type="chain" id="PRO_0000374760" description="Ribosomal protein uS12 methylthiotransferase RimO">
    <location>
        <begin position="1"/>
        <end position="468"/>
    </location>
</feature>
<feature type="domain" description="MTTase N-terminal" evidence="1">
    <location>
        <begin position="16"/>
        <end position="130"/>
    </location>
</feature>
<feature type="domain" description="Radical SAM core" evidence="2">
    <location>
        <begin position="150"/>
        <end position="382"/>
    </location>
</feature>
<feature type="domain" description="TRAM" evidence="1">
    <location>
        <begin position="385"/>
        <end position="455"/>
    </location>
</feature>
<feature type="binding site" evidence="1">
    <location>
        <position position="25"/>
    </location>
    <ligand>
        <name>[4Fe-4S] cluster</name>
        <dbReference type="ChEBI" id="CHEBI:49883"/>
        <label>1</label>
    </ligand>
</feature>
<feature type="binding site" evidence="1">
    <location>
        <position position="61"/>
    </location>
    <ligand>
        <name>[4Fe-4S] cluster</name>
        <dbReference type="ChEBI" id="CHEBI:49883"/>
        <label>1</label>
    </ligand>
</feature>
<feature type="binding site" evidence="1">
    <location>
        <position position="93"/>
    </location>
    <ligand>
        <name>[4Fe-4S] cluster</name>
        <dbReference type="ChEBI" id="CHEBI:49883"/>
        <label>1</label>
    </ligand>
</feature>
<feature type="binding site" evidence="1">
    <location>
        <position position="164"/>
    </location>
    <ligand>
        <name>[4Fe-4S] cluster</name>
        <dbReference type="ChEBI" id="CHEBI:49883"/>
        <label>2</label>
        <note>4Fe-4S-S-AdoMet</note>
    </ligand>
</feature>
<feature type="binding site" evidence="1">
    <location>
        <position position="168"/>
    </location>
    <ligand>
        <name>[4Fe-4S] cluster</name>
        <dbReference type="ChEBI" id="CHEBI:49883"/>
        <label>2</label>
        <note>4Fe-4S-S-AdoMet</note>
    </ligand>
</feature>
<feature type="binding site" evidence="1">
    <location>
        <position position="171"/>
    </location>
    <ligand>
        <name>[4Fe-4S] cluster</name>
        <dbReference type="ChEBI" id="CHEBI:49883"/>
        <label>2</label>
        <note>4Fe-4S-S-AdoMet</note>
    </ligand>
</feature>
<feature type="sequence conflict" description="In Ref. 2; BAA98461." evidence="3" ref="2">
    <original>G</original>
    <variation>D</variation>
    <location>
        <position position="7"/>
    </location>
</feature>
<organism>
    <name type="scientific">Chlamydia pneumoniae</name>
    <name type="common">Chlamydophila pneumoniae</name>
    <dbReference type="NCBI Taxonomy" id="83558"/>
    <lineage>
        <taxon>Bacteria</taxon>
        <taxon>Pseudomonadati</taxon>
        <taxon>Chlamydiota</taxon>
        <taxon>Chlamydiia</taxon>
        <taxon>Chlamydiales</taxon>
        <taxon>Chlamydiaceae</taxon>
        <taxon>Chlamydia/Chlamydophila group</taxon>
        <taxon>Chlamydia</taxon>
    </lineage>
</organism>
<protein>
    <recommendedName>
        <fullName evidence="1">Ribosomal protein uS12 methylthiotransferase RimO</fullName>
        <shortName evidence="1">uS12 MTTase</shortName>
        <shortName evidence="1">uS12 methylthiotransferase</shortName>
        <ecNumber evidence="1">2.8.4.4</ecNumber>
    </recommendedName>
    <alternativeName>
        <fullName evidence="1">Ribosomal protein uS12 (aspartate-C(3))-methylthiotransferase</fullName>
    </alternativeName>
    <alternativeName>
        <fullName evidence="1">Ribosome maturation factor RimO</fullName>
    </alternativeName>
</protein>
<proteinExistence type="inferred from homology"/>
<reference key="1">
    <citation type="journal article" date="1999" name="Nat. Genet.">
        <title>Comparative genomes of Chlamydia pneumoniae and C. trachomatis.</title>
        <authorList>
            <person name="Kalman S."/>
            <person name="Mitchell W.P."/>
            <person name="Marathe R."/>
            <person name="Lammel C.J."/>
            <person name="Fan J."/>
            <person name="Hyman R.W."/>
            <person name="Olinger L."/>
            <person name="Grimwood J."/>
            <person name="Davis R.W."/>
            <person name="Stephens R.S."/>
        </authorList>
    </citation>
    <scope>NUCLEOTIDE SEQUENCE [LARGE SCALE GENOMIC DNA]</scope>
    <source>
        <strain>CWL029</strain>
    </source>
</reference>
<reference key="2">
    <citation type="journal article" date="2000" name="Nucleic Acids Res.">
        <title>Comparison of whole genome sequences of Chlamydia pneumoniae J138 from Japan and CWL029 from USA.</title>
        <authorList>
            <person name="Shirai M."/>
            <person name="Hirakawa H."/>
            <person name="Kimoto M."/>
            <person name="Tabuchi M."/>
            <person name="Kishi F."/>
            <person name="Ouchi K."/>
            <person name="Shiba T."/>
            <person name="Ishii K."/>
            <person name="Hattori M."/>
            <person name="Kuhara S."/>
            <person name="Nakazawa T."/>
        </authorList>
    </citation>
    <scope>NUCLEOTIDE SEQUENCE [LARGE SCALE GENOMIC DNA]</scope>
    <source>
        <strain>J138</strain>
    </source>
</reference>
<reference key="3">
    <citation type="journal article" date="2000" name="Nucleic Acids Res.">
        <title>Genome sequences of Chlamydia trachomatis MoPn and Chlamydia pneumoniae AR39.</title>
        <authorList>
            <person name="Read T.D."/>
            <person name="Brunham R.C."/>
            <person name="Shen C."/>
            <person name="Gill S.R."/>
            <person name="Heidelberg J.F."/>
            <person name="White O."/>
            <person name="Hickey E.K."/>
            <person name="Peterson J.D."/>
            <person name="Utterback T.R."/>
            <person name="Berry K.J."/>
            <person name="Bass S."/>
            <person name="Linher K.D."/>
            <person name="Weidman J.F."/>
            <person name="Khouri H.M."/>
            <person name="Craven B."/>
            <person name="Bowman C."/>
            <person name="Dodson R.J."/>
            <person name="Gwinn M.L."/>
            <person name="Nelson W.C."/>
            <person name="DeBoy R.T."/>
            <person name="Kolonay J.F."/>
            <person name="McClarty G."/>
            <person name="Salzberg S.L."/>
            <person name="Eisen J.A."/>
            <person name="Fraser C.M."/>
        </authorList>
    </citation>
    <scope>NUCLEOTIDE SEQUENCE [LARGE SCALE GENOMIC DNA]</scope>
    <source>
        <strain>AR39</strain>
    </source>
</reference>
<reference key="4">
    <citation type="submission" date="2002-05" db="EMBL/GenBank/DDBJ databases">
        <title>The genome sequence of Chlamydia pneumoniae TW183 and comparison with other Chlamydia strains based on whole genome sequence analysis.</title>
        <authorList>
            <person name="Geng M.M."/>
            <person name="Schuhmacher A."/>
            <person name="Muehldorfer I."/>
            <person name="Bensch K.W."/>
            <person name="Schaefer K.P."/>
            <person name="Schneider S."/>
            <person name="Pohl T."/>
            <person name="Essig A."/>
            <person name="Marre R."/>
            <person name="Melchers K."/>
        </authorList>
    </citation>
    <scope>NUCLEOTIDE SEQUENCE [LARGE SCALE GENOMIC DNA]</scope>
    <source>
        <strain>TW-183</strain>
    </source>
</reference>
<name>RIMO_CHLPN</name>
<accession>Q9Z8T3</accession>
<accession>Q7BXL8</accession>
<accession>Q9JSH1</accession>
<accession>Q9K258</accession>
<evidence type="ECO:0000255" key="1">
    <source>
        <dbReference type="HAMAP-Rule" id="MF_01865"/>
    </source>
</evidence>
<evidence type="ECO:0000255" key="2">
    <source>
        <dbReference type="PROSITE-ProRule" id="PRU01266"/>
    </source>
</evidence>
<evidence type="ECO:0000305" key="3"/>
<dbReference type="EC" id="2.8.4.4" evidence="1"/>
<dbReference type="EMBL" id="AE001363">
    <property type="protein sequence ID" value="AAD18404.1"/>
    <property type="status" value="ALT_INIT"/>
    <property type="molecule type" value="Genomic_DNA"/>
</dbReference>
<dbReference type="EMBL" id="BA000008">
    <property type="protein sequence ID" value="BAA98461.1"/>
    <property type="status" value="ALT_INIT"/>
    <property type="molecule type" value="Genomic_DNA"/>
</dbReference>
<dbReference type="EMBL" id="AE002161">
    <property type="protein sequence ID" value="AAF38338.1"/>
    <property type="status" value="ALT_INIT"/>
    <property type="molecule type" value="Genomic_DNA"/>
</dbReference>
<dbReference type="EMBL" id="AE009440">
    <property type="protein sequence ID" value="AAP98191.1"/>
    <property type="status" value="ALT_INIT"/>
    <property type="molecule type" value="Genomic_DNA"/>
</dbReference>
<dbReference type="PIR" id="A81571">
    <property type="entry name" value="A81571"/>
</dbReference>
<dbReference type="PIR" id="C86522">
    <property type="entry name" value="C86522"/>
</dbReference>
<dbReference type="PIR" id="G72101">
    <property type="entry name" value="G72101"/>
</dbReference>
<dbReference type="RefSeq" id="NP_224460.1">
    <property type="nucleotide sequence ID" value="NC_000922.1"/>
</dbReference>
<dbReference type="RefSeq" id="WP_041466977.1">
    <property type="nucleotide sequence ID" value="NZ_LN847257.1"/>
</dbReference>
<dbReference type="SMR" id="Q9Z8T3"/>
<dbReference type="STRING" id="406984.CPK_ORF00762"/>
<dbReference type="GeneID" id="45050298"/>
<dbReference type="KEGG" id="cpa:CP_0510"/>
<dbReference type="KEGG" id="cpj:CPj0251"/>
<dbReference type="KEGG" id="cpn:CPn_0251"/>
<dbReference type="KEGG" id="cpt:CpB0258"/>
<dbReference type="PATRIC" id="fig|115713.3.peg.283"/>
<dbReference type="eggNOG" id="COG0621">
    <property type="taxonomic scope" value="Bacteria"/>
</dbReference>
<dbReference type="HOGENOM" id="CLU_018697_0_1_0"/>
<dbReference type="OrthoDB" id="9805215at2"/>
<dbReference type="Proteomes" id="UP000000583">
    <property type="component" value="Chromosome"/>
</dbReference>
<dbReference type="Proteomes" id="UP000000801">
    <property type="component" value="Chromosome"/>
</dbReference>
<dbReference type="GO" id="GO:0005829">
    <property type="term" value="C:cytosol"/>
    <property type="evidence" value="ECO:0007669"/>
    <property type="project" value="TreeGrafter"/>
</dbReference>
<dbReference type="GO" id="GO:0051539">
    <property type="term" value="F:4 iron, 4 sulfur cluster binding"/>
    <property type="evidence" value="ECO:0007669"/>
    <property type="project" value="UniProtKB-UniRule"/>
</dbReference>
<dbReference type="GO" id="GO:0035599">
    <property type="term" value="F:aspartic acid methylthiotransferase activity"/>
    <property type="evidence" value="ECO:0007669"/>
    <property type="project" value="TreeGrafter"/>
</dbReference>
<dbReference type="GO" id="GO:0046872">
    <property type="term" value="F:metal ion binding"/>
    <property type="evidence" value="ECO:0007669"/>
    <property type="project" value="UniProtKB-KW"/>
</dbReference>
<dbReference type="GO" id="GO:0103039">
    <property type="term" value="F:protein methylthiotransferase activity"/>
    <property type="evidence" value="ECO:0007669"/>
    <property type="project" value="UniProtKB-EC"/>
</dbReference>
<dbReference type="GO" id="GO:0006400">
    <property type="term" value="P:tRNA modification"/>
    <property type="evidence" value="ECO:0007669"/>
    <property type="project" value="InterPro"/>
</dbReference>
<dbReference type="CDD" id="cd01335">
    <property type="entry name" value="Radical_SAM"/>
    <property type="match status" value="1"/>
</dbReference>
<dbReference type="FunFam" id="3.80.30.20:FF:000001">
    <property type="entry name" value="tRNA-2-methylthio-N(6)-dimethylallyladenosine synthase 2"/>
    <property type="match status" value="1"/>
</dbReference>
<dbReference type="Gene3D" id="3.40.50.12160">
    <property type="entry name" value="Methylthiotransferase, N-terminal domain"/>
    <property type="match status" value="1"/>
</dbReference>
<dbReference type="Gene3D" id="2.40.50.140">
    <property type="entry name" value="Nucleic acid-binding proteins"/>
    <property type="match status" value="1"/>
</dbReference>
<dbReference type="Gene3D" id="3.80.30.20">
    <property type="entry name" value="tm_1862 like domain"/>
    <property type="match status" value="1"/>
</dbReference>
<dbReference type="HAMAP" id="MF_01865">
    <property type="entry name" value="MTTase_RimO"/>
    <property type="match status" value="1"/>
</dbReference>
<dbReference type="InterPro" id="IPR006638">
    <property type="entry name" value="Elp3/MiaA/NifB-like_rSAM"/>
</dbReference>
<dbReference type="InterPro" id="IPR005839">
    <property type="entry name" value="Methylthiotransferase"/>
</dbReference>
<dbReference type="InterPro" id="IPR020612">
    <property type="entry name" value="Methylthiotransferase_CS"/>
</dbReference>
<dbReference type="InterPro" id="IPR013848">
    <property type="entry name" value="Methylthiotransferase_N"/>
</dbReference>
<dbReference type="InterPro" id="IPR038135">
    <property type="entry name" value="Methylthiotransferase_N_sf"/>
</dbReference>
<dbReference type="InterPro" id="IPR012340">
    <property type="entry name" value="NA-bd_OB-fold"/>
</dbReference>
<dbReference type="InterPro" id="IPR005840">
    <property type="entry name" value="Ribosomal_uS12_MeSTrfase_RimO"/>
</dbReference>
<dbReference type="InterPro" id="IPR007197">
    <property type="entry name" value="rSAM"/>
</dbReference>
<dbReference type="InterPro" id="IPR023404">
    <property type="entry name" value="rSAM_horseshoe"/>
</dbReference>
<dbReference type="InterPro" id="IPR002792">
    <property type="entry name" value="TRAM_dom"/>
</dbReference>
<dbReference type="NCBIfam" id="TIGR01125">
    <property type="entry name" value="30S ribosomal protein S12 methylthiotransferase RimO"/>
    <property type="match status" value="1"/>
</dbReference>
<dbReference type="NCBIfam" id="TIGR00089">
    <property type="entry name" value="MiaB/RimO family radical SAM methylthiotransferase"/>
    <property type="match status" value="1"/>
</dbReference>
<dbReference type="PANTHER" id="PTHR43837">
    <property type="entry name" value="RIBOSOMAL PROTEIN S12 METHYLTHIOTRANSFERASE RIMO"/>
    <property type="match status" value="1"/>
</dbReference>
<dbReference type="PANTHER" id="PTHR43837:SF1">
    <property type="entry name" value="RIBOSOMAL PROTEIN US12 METHYLTHIOTRANSFERASE RIMO"/>
    <property type="match status" value="1"/>
</dbReference>
<dbReference type="Pfam" id="PF04055">
    <property type="entry name" value="Radical_SAM"/>
    <property type="match status" value="1"/>
</dbReference>
<dbReference type="Pfam" id="PF18693">
    <property type="entry name" value="TRAM_2"/>
    <property type="match status" value="1"/>
</dbReference>
<dbReference type="Pfam" id="PF00919">
    <property type="entry name" value="UPF0004"/>
    <property type="match status" value="1"/>
</dbReference>
<dbReference type="SFLD" id="SFLDG01082">
    <property type="entry name" value="B12-binding_domain_containing"/>
    <property type="match status" value="1"/>
</dbReference>
<dbReference type="SFLD" id="SFLDS00029">
    <property type="entry name" value="Radical_SAM"/>
    <property type="match status" value="1"/>
</dbReference>
<dbReference type="SFLD" id="SFLDF00274">
    <property type="entry name" value="ribosomal_protein_S12_methylth"/>
    <property type="match status" value="1"/>
</dbReference>
<dbReference type="SMART" id="SM00729">
    <property type="entry name" value="Elp3"/>
    <property type="match status" value="1"/>
</dbReference>
<dbReference type="SUPFAM" id="SSF102114">
    <property type="entry name" value="Radical SAM enzymes"/>
    <property type="match status" value="1"/>
</dbReference>
<dbReference type="PROSITE" id="PS51449">
    <property type="entry name" value="MTTASE_N"/>
    <property type="match status" value="1"/>
</dbReference>
<dbReference type="PROSITE" id="PS01278">
    <property type="entry name" value="MTTASE_RADICAL"/>
    <property type="match status" value="1"/>
</dbReference>
<dbReference type="PROSITE" id="PS51918">
    <property type="entry name" value="RADICAL_SAM"/>
    <property type="match status" value="1"/>
</dbReference>
<keyword id="KW-0004">4Fe-4S</keyword>
<keyword id="KW-0963">Cytoplasm</keyword>
<keyword id="KW-0408">Iron</keyword>
<keyword id="KW-0411">Iron-sulfur</keyword>
<keyword id="KW-0479">Metal-binding</keyword>
<keyword id="KW-0949">S-adenosyl-L-methionine</keyword>
<keyword id="KW-0808">Transferase</keyword>
<comment type="function">
    <text evidence="1">Catalyzes the methylthiolation of an aspartic acid residue of ribosomal protein uS12.</text>
</comment>
<comment type="catalytic activity">
    <reaction evidence="1">
        <text>L-aspartate(89)-[ribosomal protein uS12]-hydrogen + (sulfur carrier)-SH + AH2 + 2 S-adenosyl-L-methionine = 3-methylsulfanyl-L-aspartate(89)-[ribosomal protein uS12]-hydrogen + (sulfur carrier)-H + 5'-deoxyadenosine + L-methionine + A + S-adenosyl-L-homocysteine + 2 H(+)</text>
        <dbReference type="Rhea" id="RHEA:37087"/>
        <dbReference type="Rhea" id="RHEA-COMP:10460"/>
        <dbReference type="Rhea" id="RHEA-COMP:10461"/>
        <dbReference type="Rhea" id="RHEA-COMP:14737"/>
        <dbReference type="Rhea" id="RHEA-COMP:14739"/>
        <dbReference type="ChEBI" id="CHEBI:13193"/>
        <dbReference type="ChEBI" id="CHEBI:15378"/>
        <dbReference type="ChEBI" id="CHEBI:17319"/>
        <dbReference type="ChEBI" id="CHEBI:17499"/>
        <dbReference type="ChEBI" id="CHEBI:29917"/>
        <dbReference type="ChEBI" id="CHEBI:29961"/>
        <dbReference type="ChEBI" id="CHEBI:57844"/>
        <dbReference type="ChEBI" id="CHEBI:57856"/>
        <dbReference type="ChEBI" id="CHEBI:59789"/>
        <dbReference type="ChEBI" id="CHEBI:64428"/>
        <dbReference type="ChEBI" id="CHEBI:73599"/>
        <dbReference type="EC" id="2.8.4.4"/>
    </reaction>
</comment>
<comment type="cofactor">
    <cofactor evidence="1">
        <name>[4Fe-4S] cluster</name>
        <dbReference type="ChEBI" id="CHEBI:49883"/>
    </cofactor>
    <text evidence="1">Binds 2 [4Fe-4S] clusters. One cluster is coordinated with 3 cysteines and an exchangeable S-adenosyl-L-methionine.</text>
</comment>
<comment type="subcellular location">
    <subcellularLocation>
        <location evidence="1">Cytoplasm</location>
    </subcellularLocation>
</comment>
<comment type="similarity">
    <text evidence="1">Belongs to the methylthiotransferase family. RimO subfamily.</text>
</comment>
<comment type="sequence caution" evidence="3">
    <conflict type="erroneous initiation">
        <sequence resource="EMBL-CDS" id="AAD18404"/>
    </conflict>
</comment>
<comment type="sequence caution" evidence="3">
    <conflict type="erroneous initiation">
        <sequence resource="EMBL-CDS" id="AAF38338"/>
    </conflict>
</comment>
<comment type="sequence caution" evidence="3">
    <conflict type="erroneous initiation">
        <sequence resource="EMBL-CDS" id="AAP98191"/>
    </conflict>
</comment>
<comment type="sequence caution" evidence="3">
    <conflict type="erroneous initiation">
        <sequence resource="EMBL-CDS" id="BAA98461"/>
    </conflict>
</comment>
<gene>
    <name evidence="1" type="primary">rimO</name>
    <name type="ordered locus">CPn_0251</name>
    <name type="ordered locus">CP_0510</name>
    <name type="ordered locus">CPj0251</name>
    <name type="ordered locus">CpB0258</name>
</gene>
<sequence length="468" mass="52973">MTTKSLGSFNSVISKNKIHFISLGCSRNLVDSEVMLGILLKAGYESTNEIEDADYLILNTCAFLKSARDEAKDYLDHLIDVKKENAKIIVTGCMTSNHKDELKPWMSHIHYLLGSGDVENILSAIESRESGEKISAKSYIEMGEVPRQLSTPKHYAYLKVAEGCRKRCAFCIIPSIKGKLRSKPLDQILKEFRILVNKSVKEIILIAQDLGDYGKDLSTDRSSQLESLLHELLKEPGDYWLRMLYLYPDEVSDGIIDLMQSNPKLLPYVDIPLQHINDRILKQMRRTTSREQILGFLEKLRAKVPQVYIRSSVIVGFPGETQEEFQELADFIGEGWIDNLGIFLYSQEANTPAAELPDQIPEKVKESRLKILSQIQKRNVDKHNQKLIGEKIEAVIDNYHPETNLLLTARFYGQAPEVDPCIIVNEAKLVSHFGERCFIEITGTAGYDLVGRVVKKSQNQALLKTSKA</sequence>